<sequence>MGRGPSIEGRKNASDAKRGKMFTKIIREISVAARAGGGDPSNNPRLRTAMDKGLSSNMSKDVMERAIKKSTGELEGVEYEEVRYEGYAPGGVAVIVDCLTDNRVRTVADVRHAFSKCGGNMGTEGSVAFMFKRLGVLSFAAGIDEDTLTDAAIDAGADDVVVYPEDGAIDVLTAPDAFAQVRDALVATGLEPAHAEITFRADNDIAVDGDTAVQVRKLLDMLEDLDDVQDVYSNVDQAALGA</sequence>
<comment type="subcellular location">
    <subcellularLocation>
        <location evidence="1">Cytoplasm</location>
    </subcellularLocation>
</comment>
<comment type="similarity">
    <text evidence="1">Belongs to the TACO1 family.</text>
</comment>
<proteinExistence type="inferred from homology"/>
<evidence type="ECO:0000255" key="1">
    <source>
        <dbReference type="HAMAP-Rule" id="MF_00693"/>
    </source>
</evidence>
<gene>
    <name type="ordered locus">XAC3151</name>
</gene>
<keyword id="KW-0963">Cytoplasm</keyword>
<keyword id="KW-0238">DNA-binding</keyword>
<keyword id="KW-0804">Transcription</keyword>
<keyword id="KW-0805">Transcription regulation</keyword>
<feature type="chain" id="PRO_0000175934" description="Probable transcriptional regulatory protein XAC3151">
    <location>
        <begin position="1"/>
        <end position="242"/>
    </location>
</feature>
<organism>
    <name type="scientific">Xanthomonas axonopodis pv. citri (strain 306)</name>
    <dbReference type="NCBI Taxonomy" id="190486"/>
    <lineage>
        <taxon>Bacteria</taxon>
        <taxon>Pseudomonadati</taxon>
        <taxon>Pseudomonadota</taxon>
        <taxon>Gammaproteobacteria</taxon>
        <taxon>Lysobacterales</taxon>
        <taxon>Lysobacteraceae</taxon>
        <taxon>Xanthomonas</taxon>
    </lineage>
</organism>
<dbReference type="EMBL" id="AE008923">
    <property type="protein sequence ID" value="AAM37995.1"/>
    <property type="molecule type" value="Genomic_DNA"/>
</dbReference>
<dbReference type="RefSeq" id="WP_011052063.1">
    <property type="nucleotide sequence ID" value="NC_003919.1"/>
</dbReference>
<dbReference type="SMR" id="Q8PHU8"/>
<dbReference type="KEGG" id="xac:XAC3151"/>
<dbReference type="eggNOG" id="COG0217">
    <property type="taxonomic scope" value="Bacteria"/>
</dbReference>
<dbReference type="HOGENOM" id="CLU_062974_2_2_6"/>
<dbReference type="Proteomes" id="UP000000576">
    <property type="component" value="Chromosome"/>
</dbReference>
<dbReference type="GO" id="GO:0005829">
    <property type="term" value="C:cytosol"/>
    <property type="evidence" value="ECO:0007669"/>
    <property type="project" value="TreeGrafter"/>
</dbReference>
<dbReference type="GO" id="GO:0003677">
    <property type="term" value="F:DNA binding"/>
    <property type="evidence" value="ECO:0007669"/>
    <property type="project" value="UniProtKB-UniRule"/>
</dbReference>
<dbReference type="GO" id="GO:0006355">
    <property type="term" value="P:regulation of DNA-templated transcription"/>
    <property type="evidence" value="ECO:0007669"/>
    <property type="project" value="UniProtKB-UniRule"/>
</dbReference>
<dbReference type="FunFam" id="1.10.10.200:FF:000007">
    <property type="entry name" value="Probable transcriptional regulatory protein AC801_15750"/>
    <property type="match status" value="1"/>
</dbReference>
<dbReference type="FunFam" id="3.30.70.980:FF:000002">
    <property type="entry name" value="Probable transcriptional regulatory protein YebC"/>
    <property type="match status" value="1"/>
</dbReference>
<dbReference type="Gene3D" id="1.10.10.200">
    <property type="match status" value="1"/>
</dbReference>
<dbReference type="Gene3D" id="3.30.70.980">
    <property type="match status" value="2"/>
</dbReference>
<dbReference type="HAMAP" id="MF_00693">
    <property type="entry name" value="Transcrip_reg_TACO1"/>
    <property type="match status" value="1"/>
</dbReference>
<dbReference type="InterPro" id="IPR017856">
    <property type="entry name" value="Integrase-like_N"/>
</dbReference>
<dbReference type="InterPro" id="IPR048300">
    <property type="entry name" value="TACO1_YebC-like_2nd/3rd_dom"/>
</dbReference>
<dbReference type="InterPro" id="IPR049083">
    <property type="entry name" value="TACO1_YebC_N"/>
</dbReference>
<dbReference type="InterPro" id="IPR002876">
    <property type="entry name" value="Transcrip_reg_TACO1-like"/>
</dbReference>
<dbReference type="InterPro" id="IPR026564">
    <property type="entry name" value="Transcrip_reg_TACO1-like_dom3"/>
</dbReference>
<dbReference type="InterPro" id="IPR029072">
    <property type="entry name" value="YebC-like"/>
</dbReference>
<dbReference type="NCBIfam" id="NF001030">
    <property type="entry name" value="PRK00110.1"/>
    <property type="match status" value="1"/>
</dbReference>
<dbReference type="NCBIfam" id="NF009044">
    <property type="entry name" value="PRK12378.1"/>
    <property type="match status" value="1"/>
</dbReference>
<dbReference type="NCBIfam" id="TIGR01033">
    <property type="entry name" value="YebC/PmpR family DNA-binding transcriptional regulator"/>
    <property type="match status" value="1"/>
</dbReference>
<dbReference type="PANTHER" id="PTHR12532:SF6">
    <property type="entry name" value="TRANSCRIPTIONAL REGULATORY PROTEIN YEBC-RELATED"/>
    <property type="match status" value="1"/>
</dbReference>
<dbReference type="PANTHER" id="PTHR12532">
    <property type="entry name" value="TRANSLATIONAL ACTIVATOR OF CYTOCHROME C OXIDASE 1"/>
    <property type="match status" value="1"/>
</dbReference>
<dbReference type="Pfam" id="PF20772">
    <property type="entry name" value="TACO1_YebC_N"/>
    <property type="match status" value="1"/>
</dbReference>
<dbReference type="Pfam" id="PF01709">
    <property type="entry name" value="Transcrip_reg"/>
    <property type="match status" value="1"/>
</dbReference>
<dbReference type="SUPFAM" id="SSF75625">
    <property type="entry name" value="YebC-like"/>
    <property type="match status" value="1"/>
</dbReference>
<name>Y3151_XANAC</name>
<reference key="1">
    <citation type="journal article" date="2002" name="Nature">
        <title>Comparison of the genomes of two Xanthomonas pathogens with differing host specificities.</title>
        <authorList>
            <person name="da Silva A.C.R."/>
            <person name="Ferro J.A."/>
            <person name="Reinach F.C."/>
            <person name="Farah C.S."/>
            <person name="Furlan L.R."/>
            <person name="Quaggio R.B."/>
            <person name="Monteiro-Vitorello C.B."/>
            <person name="Van Sluys M.A."/>
            <person name="Almeida N.F. Jr."/>
            <person name="Alves L.M.C."/>
            <person name="do Amaral A.M."/>
            <person name="Bertolini M.C."/>
            <person name="Camargo L.E.A."/>
            <person name="Camarotte G."/>
            <person name="Cannavan F."/>
            <person name="Cardozo J."/>
            <person name="Chambergo F."/>
            <person name="Ciapina L.P."/>
            <person name="Cicarelli R.M.B."/>
            <person name="Coutinho L.L."/>
            <person name="Cursino-Santos J.R."/>
            <person name="El-Dorry H."/>
            <person name="Faria J.B."/>
            <person name="Ferreira A.J.S."/>
            <person name="Ferreira R.C.C."/>
            <person name="Ferro M.I.T."/>
            <person name="Formighieri E.F."/>
            <person name="Franco M.C."/>
            <person name="Greggio C.C."/>
            <person name="Gruber A."/>
            <person name="Katsuyama A.M."/>
            <person name="Kishi L.T."/>
            <person name="Leite R.P."/>
            <person name="Lemos E.G.M."/>
            <person name="Lemos M.V.F."/>
            <person name="Locali E.C."/>
            <person name="Machado M.A."/>
            <person name="Madeira A.M.B.N."/>
            <person name="Martinez-Rossi N.M."/>
            <person name="Martins E.C."/>
            <person name="Meidanis J."/>
            <person name="Menck C.F.M."/>
            <person name="Miyaki C.Y."/>
            <person name="Moon D.H."/>
            <person name="Moreira L.M."/>
            <person name="Novo M.T.M."/>
            <person name="Okura V.K."/>
            <person name="Oliveira M.C."/>
            <person name="Oliveira V.R."/>
            <person name="Pereira H.A."/>
            <person name="Rossi A."/>
            <person name="Sena J.A.D."/>
            <person name="Silva C."/>
            <person name="de Souza R.F."/>
            <person name="Spinola L.A.F."/>
            <person name="Takita M.A."/>
            <person name="Tamura R.E."/>
            <person name="Teixeira E.C."/>
            <person name="Tezza R.I.D."/>
            <person name="Trindade dos Santos M."/>
            <person name="Truffi D."/>
            <person name="Tsai S.M."/>
            <person name="White F.F."/>
            <person name="Setubal J.C."/>
            <person name="Kitajima J.P."/>
        </authorList>
    </citation>
    <scope>NUCLEOTIDE SEQUENCE [LARGE SCALE GENOMIC DNA]</scope>
    <source>
        <strain>306</strain>
    </source>
</reference>
<accession>Q8PHU8</accession>
<protein>
    <recommendedName>
        <fullName evidence="1">Probable transcriptional regulatory protein XAC3151</fullName>
    </recommendedName>
</protein>